<keyword id="KW-0007">Acetylation</keyword>
<keyword id="KW-0013">ADP-ribosylation</keyword>
<keyword id="KW-0963">Cytoplasm</keyword>
<keyword id="KW-0379">Hydroxylation</keyword>
<keyword id="KW-1017">Isopeptide bond</keyword>
<keyword id="KW-0539">Nucleus</keyword>
<keyword id="KW-0597">Phosphoprotein</keyword>
<keyword id="KW-1185">Reference proteome</keyword>
<keyword id="KW-0687">Ribonucleoprotein</keyword>
<keyword id="KW-0689">Ribosomal protein</keyword>
<keyword id="KW-0832">Ubl conjugation</keyword>
<accession>Q5E995</accession>
<proteinExistence type="evidence at transcript level"/>
<feature type="chain" id="PRO_0000239293" description="Small ribosomal subunit protein eS6">
    <location>
        <begin position="1"/>
        <end position="249"/>
    </location>
</feature>
<feature type="region of interest" description="Disordered" evidence="2">
    <location>
        <begin position="217"/>
        <end position="249"/>
    </location>
</feature>
<feature type="compositionally biased region" description="Basic and acidic residues" evidence="2">
    <location>
        <begin position="217"/>
        <end position="229"/>
    </location>
</feature>
<feature type="compositionally biased region" description="Low complexity" evidence="2">
    <location>
        <begin position="236"/>
        <end position="249"/>
    </location>
</feature>
<feature type="modified residue" description="ADP-ribosyl glutamic acid" evidence="1">
    <location>
        <position position="35"/>
    </location>
</feature>
<feature type="modified residue" description="(3R)-3-hydroxyarginine" evidence="1">
    <location>
        <position position="137"/>
    </location>
</feature>
<feature type="modified residue" description="Phosphoserine" evidence="1">
    <location>
        <position position="148"/>
    </location>
</feature>
<feature type="modified residue" description="N6-acetyllysine" evidence="1">
    <location>
        <position position="211"/>
    </location>
</feature>
<feature type="modified residue" description="Phosphoserine; by RPS6KA1, RPS6KA3, DAPK1 and PASK" evidence="1">
    <location>
        <position position="235"/>
    </location>
</feature>
<feature type="modified residue" description="Phosphoserine; by RPS6KA1, RPS6KA3, DAPK1 and PASK" evidence="1">
    <location>
        <position position="236"/>
    </location>
</feature>
<feature type="modified residue" description="Phosphoserine" evidence="1">
    <location>
        <position position="240"/>
    </location>
</feature>
<feature type="modified residue" description="Phosphoserine" evidence="1">
    <location>
        <position position="242"/>
    </location>
</feature>
<feature type="modified residue" description="Phosphoserine" evidence="1">
    <location>
        <position position="244"/>
    </location>
</feature>
<feature type="modified residue" description="Phosphoserine" evidence="1">
    <location>
        <position position="247"/>
    </location>
</feature>
<feature type="cross-link" description="Glycyl lysine isopeptide (Lys-Gly) (interchain with G-Cter in SUMO2)" evidence="1">
    <location>
        <position position="14"/>
    </location>
</feature>
<organism>
    <name type="scientific">Bos taurus</name>
    <name type="common">Bovine</name>
    <dbReference type="NCBI Taxonomy" id="9913"/>
    <lineage>
        <taxon>Eukaryota</taxon>
        <taxon>Metazoa</taxon>
        <taxon>Chordata</taxon>
        <taxon>Craniata</taxon>
        <taxon>Vertebrata</taxon>
        <taxon>Euteleostomi</taxon>
        <taxon>Mammalia</taxon>
        <taxon>Eutheria</taxon>
        <taxon>Laurasiatheria</taxon>
        <taxon>Artiodactyla</taxon>
        <taxon>Ruminantia</taxon>
        <taxon>Pecora</taxon>
        <taxon>Bovidae</taxon>
        <taxon>Bovinae</taxon>
        <taxon>Bos</taxon>
    </lineage>
</organism>
<evidence type="ECO:0000250" key="1">
    <source>
        <dbReference type="UniProtKB" id="P62753"/>
    </source>
</evidence>
<evidence type="ECO:0000256" key="2">
    <source>
        <dbReference type="SAM" id="MobiDB-lite"/>
    </source>
</evidence>
<evidence type="ECO:0000305" key="3"/>
<dbReference type="EMBL" id="BT021025">
    <property type="protein sequence ID" value="AAX09042.1"/>
    <property type="molecule type" value="mRNA"/>
</dbReference>
<dbReference type="EMBL" id="AY911358">
    <property type="protein sequence ID" value="AAW82123.1"/>
    <property type="molecule type" value="mRNA"/>
</dbReference>
<dbReference type="EMBL" id="BC102493">
    <property type="protein sequence ID" value="AAI02494.1"/>
    <property type="molecule type" value="mRNA"/>
</dbReference>
<dbReference type="RefSeq" id="NP_001015548.1">
    <property type="nucleotide sequence ID" value="NM_001015548.2"/>
</dbReference>
<dbReference type="SMR" id="Q5E995"/>
<dbReference type="FunCoup" id="Q5E995">
    <property type="interactions" value="3281"/>
</dbReference>
<dbReference type="STRING" id="9913.ENSBTAP00000049139"/>
<dbReference type="iPTMnet" id="Q5E995"/>
<dbReference type="PaxDb" id="9913-ENSBTAP00000006990"/>
<dbReference type="PeptideAtlas" id="Q5E995"/>
<dbReference type="GeneID" id="787914"/>
<dbReference type="KEGG" id="bta:787914"/>
<dbReference type="CTD" id="6194"/>
<dbReference type="VEuPathDB" id="HostDB:ENSBTAG00000023462"/>
<dbReference type="eggNOG" id="KOG1646">
    <property type="taxonomic scope" value="Eukaryota"/>
</dbReference>
<dbReference type="InParanoid" id="Q5E995"/>
<dbReference type="OMA" id="KPRYKAP"/>
<dbReference type="OrthoDB" id="10260596at2759"/>
<dbReference type="Reactome" id="R-BTA-156827">
    <property type="pathway name" value="L13a-mediated translational silencing of Ceruloplasmin expression"/>
</dbReference>
<dbReference type="Reactome" id="R-BTA-166208">
    <property type="pathway name" value="mTORC1-mediated signalling"/>
</dbReference>
<dbReference type="Reactome" id="R-BTA-1799339">
    <property type="pathway name" value="SRP-dependent cotranslational protein targeting to membrane"/>
</dbReference>
<dbReference type="Reactome" id="R-BTA-6791226">
    <property type="pathway name" value="Major pathway of rRNA processing in the nucleolus and cytosol"/>
</dbReference>
<dbReference type="Reactome" id="R-BTA-72649">
    <property type="pathway name" value="Translation initiation complex formation"/>
</dbReference>
<dbReference type="Reactome" id="R-BTA-72689">
    <property type="pathway name" value="Formation of a pool of free 40S subunits"/>
</dbReference>
<dbReference type="Reactome" id="R-BTA-72695">
    <property type="pathway name" value="Formation of the ternary complex, and subsequently, the 43S complex"/>
</dbReference>
<dbReference type="Reactome" id="R-BTA-72702">
    <property type="pathway name" value="Ribosomal scanning and start codon recognition"/>
</dbReference>
<dbReference type="Reactome" id="R-BTA-72706">
    <property type="pathway name" value="GTP hydrolysis and joining of the 60S ribosomal subunit"/>
</dbReference>
<dbReference type="Reactome" id="R-BTA-9629569">
    <property type="pathway name" value="Protein hydroxylation"/>
</dbReference>
<dbReference type="Reactome" id="R-BTA-975956">
    <property type="pathway name" value="Nonsense Mediated Decay (NMD) independent of the Exon Junction Complex (EJC)"/>
</dbReference>
<dbReference type="Reactome" id="R-BTA-975957">
    <property type="pathway name" value="Nonsense Mediated Decay (NMD) enhanced by the Exon Junction Complex (EJC)"/>
</dbReference>
<dbReference type="CD-CODE" id="D7FE2080">
    <property type="entry name" value="Nucleolus"/>
</dbReference>
<dbReference type="Proteomes" id="UP000009136">
    <property type="component" value="Chromosome 8"/>
</dbReference>
<dbReference type="Bgee" id="ENSBTAG00000023462">
    <property type="expression patterns" value="Expressed in myometrium and 105 other cell types or tissues"/>
</dbReference>
<dbReference type="GO" id="GO:0022627">
    <property type="term" value="C:cytosolic small ribosomal subunit"/>
    <property type="evidence" value="ECO:0000250"/>
    <property type="project" value="AgBase"/>
</dbReference>
<dbReference type="GO" id="GO:0005730">
    <property type="term" value="C:nucleolus"/>
    <property type="evidence" value="ECO:0007669"/>
    <property type="project" value="UniProtKB-SubCell"/>
</dbReference>
<dbReference type="GO" id="GO:0005634">
    <property type="term" value="C:nucleus"/>
    <property type="evidence" value="ECO:0000250"/>
    <property type="project" value="AgBase"/>
</dbReference>
<dbReference type="GO" id="GO:0048471">
    <property type="term" value="C:perinuclear region of cytoplasm"/>
    <property type="evidence" value="ECO:0000250"/>
    <property type="project" value="AgBase"/>
</dbReference>
<dbReference type="GO" id="GO:0032040">
    <property type="term" value="C:small-subunit processome"/>
    <property type="evidence" value="ECO:0000250"/>
    <property type="project" value="UniProtKB"/>
</dbReference>
<dbReference type="GO" id="GO:0003735">
    <property type="term" value="F:structural constituent of ribosome"/>
    <property type="evidence" value="ECO:0007669"/>
    <property type="project" value="InterPro"/>
</dbReference>
<dbReference type="GO" id="GO:0002181">
    <property type="term" value="P:cytoplasmic translation"/>
    <property type="evidence" value="ECO:0000250"/>
    <property type="project" value="UniProtKB"/>
</dbReference>
<dbReference type="GO" id="GO:0042593">
    <property type="term" value="P:glucose homeostasis"/>
    <property type="evidence" value="ECO:0000250"/>
    <property type="project" value="AgBase"/>
</dbReference>
<dbReference type="GO" id="GO:0008284">
    <property type="term" value="P:positive regulation of cell population proliferation"/>
    <property type="evidence" value="ECO:0000250"/>
    <property type="project" value="UniProtKB"/>
</dbReference>
<dbReference type="GO" id="GO:0042274">
    <property type="term" value="P:ribosomal small subunit biogenesis"/>
    <property type="evidence" value="ECO:0000250"/>
    <property type="project" value="UniProtKB"/>
</dbReference>
<dbReference type="FunFam" id="1.20.5.2650:FF:000001">
    <property type="entry name" value="40S ribosomal protein S6"/>
    <property type="match status" value="1"/>
</dbReference>
<dbReference type="Gene3D" id="1.20.5.2650">
    <property type="match status" value="1"/>
</dbReference>
<dbReference type="InterPro" id="IPR001377">
    <property type="entry name" value="Ribosomal_eS6"/>
</dbReference>
<dbReference type="InterPro" id="IPR014401">
    <property type="entry name" value="Ribosomal_eS6-like"/>
</dbReference>
<dbReference type="InterPro" id="IPR018282">
    <property type="entry name" value="Ribosomal_eS6_CS"/>
</dbReference>
<dbReference type="PANTHER" id="PTHR11502">
    <property type="entry name" value="40S RIBOSOMAL PROTEIN S6"/>
    <property type="match status" value="1"/>
</dbReference>
<dbReference type="Pfam" id="PF01092">
    <property type="entry name" value="Ribosomal_S6e"/>
    <property type="match status" value="1"/>
</dbReference>
<dbReference type="PIRSF" id="PIRSF002129">
    <property type="entry name" value="Ribosom_S6_euk"/>
    <property type="match status" value="1"/>
</dbReference>
<dbReference type="SMART" id="SM01405">
    <property type="entry name" value="Ribosomal_S6e"/>
    <property type="match status" value="1"/>
</dbReference>
<dbReference type="PROSITE" id="PS00578">
    <property type="entry name" value="RIBOSOMAL_S6E"/>
    <property type="match status" value="1"/>
</dbReference>
<gene>
    <name type="primary">RPS6</name>
</gene>
<sequence>MKLNISFPATGCQKLIEVDDERKLRTFYEKRMATEVAADALGEEWKGYVVRISGGNDKQGFPMKQGVLTHGRVRLLLSKGHSCYRPRRTGERKRKSVRGCIVDANLSVLNLVIVKKGEKDIPGLTDTTVPRRLGPKRASRIRKLFNLSKEDDVRQYVVRKPLNKDGKKPRTKAPKIQRLVTPRVLQHKRRRIALKKQRTKKNKEEAAEYAKLLAKRMKEAKEKRQEQIAKRRRLSSLRASTSKSESSQK</sequence>
<reference key="1">
    <citation type="journal article" date="2005" name="BMC Genomics">
        <title>Characterization of 954 bovine full-CDS cDNA sequences.</title>
        <authorList>
            <person name="Harhay G.P."/>
            <person name="Sonstegard T.S."/>
            <person name="Keele J.W."/>
            <person name="Heaton M.P."/>
            <person name="Clawson M.L."/>
            <person name="Snelling W.M."/>
            <person name="Wiedmann R.T."/>
            <person name="Van Tassell C.P."/>
            <person name="Smith T.P.L."/>
        </authorList>
    </citation>
    <scope>NUCLEOTIDE SEQUENCE [LARGE SCALE MRNA]</scope>
</reference>
<reference key="2">
    <citation type="submission" date="2005-01" db="EMBL/GenBank/DDBJ databases">
        <title>Analysis of sequences obtained from constructed full-length bovine cDNA libraries.</title>
        <authorList>
            <person name="Yu J."/>
            <person name="Meng Y."/>
            <person name="Wang Z."/>
            <person name="Hansen C."/>
            <person name="Li C."/>
            <person name="Moore S.S."/>
        </authorList>
    </citation>
    <scope>NUCLEOTIDE SEQUENCE [LARGE SCALE MRNA]</scope>
    <source>
        <tissue>Lymphoid epithelium</tissue>
    </source>
</reference>
<reference key="3">
    <citation type="submission" date="2005-08" db="EMBL/GenBank/DDBJ databases">
        <authorList>
            <consortium name="NIH - Mammalian Gene Collection (MGC) project"/>
        </authorList>
    </citation>
    <scope>NUCLEOTIDE SEQUENCE [LARGE SCALE MRNA]</scope>
    <source>
        <strain>Crossbred X Angus</strain>
        <tissue>Ileum</tissue>
    </source>
</reference>
<comment type="function">
    <text evidence="1">Component of the 40S small ribosomal subunit. Plays an important role in controlling cell growth and proliferation through the selective translation of particular classes of mRNA. Part of the small subunit (SSU) processome, first precursor of the small eukaryotic ribosomal subunit. During the assembly of the SSU processome in the nucleolus, many ribosome biogenesis factors, an RNA chaperone and ribosomal proteins associate with the nascent pre-rRNA and work in concert to generate RNA folding, modifications, rearrangements and cleavage as well as targeted degradation of pre-ribosomal RNA by the RNA exosome.</text>
</comment>
<comment type="subunit">
    <text evidence="1">Component of the small ribosomal subunit. Part of the small subunit (SSU) processome, composed of more than 70 proteins and the RNA chaperone small nucleolar RNA (snoRNA) U3.</text>
</comment>
<comment type="subcellular location">
    <subcellularLocation>
        <location evidence="1">Cytoplasm</location>
    </subcellularLocation>
    <subcellularLocation>
        <location evidence="1">Nucleus</location>
        <location evidence="1">Nucleolus</location>
    </subcellularLocation>
</comment>
<comment type="PTM">
    <text evidence="1">Ribosomal protein S6 is the major substrate of protein kinases in eukaryote ribosomes. The phosphorylation is stimulated by growth factors, tumor promoting agents, and mitogens. It is dephosphorylated at growth arrest. Phosphorylated at Ser-235 and Ser-236 by RPS6KA1 and RPS6KA3; phosphorylation at these sites facilitates the assembly of the pre-initiation complex.</text>
</comment>
<comment type="PTM">
    <text evidence="1">Specifically hydroxylated (with R stereochemistry) at C-3 of Arg-137 by KDM8.</text>
</comment>
<comment type="PTM">
    <text evidence="1">Mono-ADP-ribosylation at Glu-35 by PARP16 inhibits polysome assembly and mRNA loading, thereby inhibiting protein translation.</text>
</comment>
<comment type="similarity">
    <text evidence="3">Belongs to the eukaryotic ribosomal protein eS6 family.</text>
</comment>
<name>RS6_BOVIN</name>
<protein>
    <recommendedName>
        <fullName evidence="3">Small ribosomal subunit protein eS6</fullName>
    </recommendedName>
    <alternativeName>
        <fullName>40S ribosomal protein S6</fullName>
    </alternativeName>
</protein>